<gene>
    <name evidence="1" type="primary">atpC</name>
    <name type="ordered locus">HY04AAS1_1087</name>
</gene>
<proteinExistence type="inferred from homology"/>
<evidence type="ECO:0000255" key="1">
    <source>
        <dbReference type="HAMAP-Rule" id="MF_00530"/>
    </source>
</evidence>
<keyword id="KW-0066">ATP synthesis</keyword>
<keyword id="KW-0997">Cell inner membrane</keyword>
<keyword id="KW-1003">Cell membrane</keyword>
<keyword id="KW-0139">CF(1)</keyword>
<keyword id="KW-0375">Hydrogen ion transport</keyword>
<keyword id="KW-0406">Ion transport</keyword>
<keyword id="KW-0472">Membrane</keyword>
<keyword id="KW-0813">Transport</keyword>
<name>ATPE_HYDS0</name>
<accession>B4U9G2</accession>
<reference key="1">
    <citation type="journal article" date="2009" name="J. Bacteriol.">
        <title>Complete and draft genome sequences of six members of the Aquificales.</title>
        <authorList>
            <person name="Reysenbach A.-L."/>
            <person name="Hamamura N."/>
            <person name="Podar M."/>
            <person name="Griffiths E."/>
            <person name="Ferreira S."/>
            <person name="Hochstein R."/>
            <person name="Heidelberg J."/>
            <person name="Johnson J."/>
            <person name="Mead D."/>
            <person name="Pohorille A."/>
            <person name="Sarmiento M."/>
            <person name="Schweighofer K."/>
            <person name="Seshadri R."/>
            <person name="Voytek M.A."/>
        </authorList>
    </citation>
    <scope>NUCLEOTIDE SEQUENCE [LARGE SCALE GENOMIC DNA]</scope>
    <source>
        <strain>Y04AAS1</strain>
    </source>
</reference>
<feature type="chain" id="PRO_1000127866" description="ATP synthase epsilon chain">
    <location>
        <begin position="1"/>
        <end position="136"/>
    </location>
</feature>
<sequence>MLKVDIVTPKGIVYTEEVESVNIPAYDGEMGILENHMLLLTQIKPGLVYFNKDDKNGIAVGYGFADITPDKVIILTEEAVPVGNIDLEEYKKVFEEATRKLSDARTAEEISEWQKKREMAETFINIAKHFSPKIKA</sequence>
<comment type="function">
    <text evidence="1">Produces ATP from ADP in the presence of a proton gradient across the membrane.</text>
</comment>
<comment type="subunit">
    <text evidence="1">F-type ATPases have 2 components, CF(1) - the catalytic core - and CF(0) - the membrane proton channel. CF(1) has five subunits: alpha(3), beta(3), gamma(1), delta(1), epsilon(1). CF(0) has three main subunits: a, b and c.</text>
</comment>
<comment type="subcellular location">
    <subcellularLocation>
        <location evidence="1">Cell inner membrane</location>
        <topology evidence="1">Peripheral membrane protein</topology>
    </subcellularLocation>
</comment>
<comment type="similarity">
    <text evidence="1">Belongs to the ATPase epsilon chain family.</text>
</comment>
<dbReference type="EMBL" id="CP001130">
    <property type="protein sequence ID" value="ACG57773.1"/>
    <property type="molecule type" value="Genomic_DNA"/>
</dbReference>
<dbReference type="RefSeq" id="WP_012514129.1">
    <property type="nucleotide sequence ID" value="NC_011126.1"/>
</dbReference>
<dbReference type="SMR" id="B4U9G2"/>
<dbReference type="STRING" id="380749.HY04AAS1_1087"/>
<dbReference type="KEGG" id="hya:HY04AAS1_1087"/>
<dbReference type="eggNOG" id="COG0355">
    <property type="taxonomic scope" value="Bacteria"/>
</dbReference>
<dbReference type="HOGENOM" id="CLU_084338_1_2_0"/>
<dbReference type="OrthoDB" id="9804110at2"/>
<dbReference type="GO" id="GO:0005886">
    <property type="term" value="C:plasma membrane"/>
    <property type="evidence" value="ECO:0007669"/>
    <property type="project" value="UniProtKB-SubCell"/>
</dbReference>
<dbReference type="GO" id="GO:0045259">
    <property type="term" value="C:proton-transporting ATP synthase complex"/>
    <property type="evidence" value="ECO:0007669"/>
    <property type="project" value="UniProtKB-KW"/>
</dbReference>
<dbReference type="GO" id="GO:0005524">
    <property type="term" value="F:ATP binding"/>
    <property type="evidence" value="ECO:0007669"/>
    <property type="project" value="UniProtKB-UniRule"/>
</dbReference>
<dbReference type="GO" id="GO:0046933">
    <property type="term" value="F:proton-transporting ATP synthase activity, rotational mechanism"/>
    <property type="evidence" value="ECO:0007669"/>
    <property type="project" value="UniProtKB-UniRule"/>
</dbReference>
<dbReference type="CDD" id="cd12152">
    <property type="entry name" value="F1-ATPase_delta"/>
    <property type="match status" value="1"/>
</dbReference>
<dbReference type="Gene3D" id="2.60.15.10">
    <property type="entry name" value="F0F1 ATP synthase delta/epsilon subunit, N-terminal"/>
    <property type="match status" value="1"/>
</dbReference>
<dbReference type="HAMAP" id="MF_00530">
    <property type="entry name" value="ATP_synth_epsil_bac"/>
    <property type="match status" value="1"/>
</dbReference>
<dbReference type="InterPro" id="IPR001469">
    <property type="entry name" value="ATP_synth_F1_dsu/esu"/>
</dbReference>
<dbReference type="InterPro" id="IPR020546">
    <property type="entry name" value="ATP_synth_F1_dsu/esu_N"/>
</dbReference>
<dbReference type="InterPro" id="IPR036771">
    <property type="entry name" value="ATPsynth_dsu/esu_N"/>
</dbReference>
<dbReference type="NCBIfam" id="TIGR01216">
    <property type="entry name" value="ATP_synt_epsi"/>
    <property type="match status" value="1"/>
</dbReference>
<dbReference type="PANTHER" id="PTHR13822">
    <property type="entry name" value="ATP SYNTHASE DELTA/EPSILON CHAIN"/>
    <property type="match status" value="1"/>
</dbReference>
<dbReference type="PANTHER" id="PTHR13822:SF10">
    <property type="entry name" value="ATP SYNTHASE EPSILON CHAIN, CHLOROPLASTIC"/>
    <property type="match status" value="1"/>
</dbReference>
<dbReference type="Pfam" id="PF02823">
    <property type="entry name" value="ATP-synt_DE_N"/>
    <property type="match status" value="1"/>
</dbReference>
<dbReference type="SUPFAM" id="SSF51344">
    <property type="entry name" value="Epsilon subunit of F1F0-ATP synthase N-terminal domain"/>
    <property type="match status" value="1"/>
</dbReference>
<organism>
    <name type="scientific">Hydrogenobaculum sp. (strain Y04AAS1)</name>
    <dbReference type="NCBI Taxonomy" id="380749"/>
    <lineage>
        <taxon>Bacteria</taxon>
        <taxon>Pseudomonadati</taxon>
        <taxon>Aquificota</taxon>
        <taxon>Aquificia</taxon>
        <taxon>Aquificales</taxon>
        <taxon>Aquificaceae</taxon>
        <taxon>Hydrogenobaculum</taxon>
    </lineage>
</organism>
<protein>
    <recommendedName>
        <fullName evidence="1">ATP synthase epsilon chain</fullName>
    </recommendedName>
    <alternativeName>
        <fullName evidence="1">ATP synthase F1 sector epsilon subunit</fullName>
    </alternativeName>
    <alternativeName>
        <fullName evidence="1">F-ATPase epsilon subunit</fullName>
    </alternativeName>
</protein>